<gene>
    <name evidence="6" type="primary">LFR</name>
    <name evidence="8" type="ordered locus">At3g22990</name>
    <name evidence="9" type="ORF">MXC7.2</name>
</gene>
<proteinExistence type="evidence at protein level"/>
<keyword id="KW-0217">Developmental protein</keyword>
<keyword id="KW-0341">Growth regulation</keyword>
<keyword id="KW-0539">Nucleus</keyword>
<keyword id="KW-1185">Reference proteome</keyword>
<keyword id="KW-0677">Repeat</keyword>
<reference key="1">
    <citation type="journal article" date="2000" name="DNA Res.">
        <title>Structural analysis of Arabidopsis thaliana chromosome 3. I. Sequence features of the regions of 4,504,864 bp covered by sixty P1 and TAC clones.</title>
        <authorList>
            <person name="Sato S."/>
            <person name="Nakamura Y."/>
            <person name="Kaneko T."/>
            <person name="Katoh T."/>
            <person name="Asamizu E."/>
            <person name="Tabata S."/>
        </authorList>
    </citation>
    <scope>NUCLEOTIDE SEQUENCE [LARGE SCALE GENOMIC DNA]</scope>
    <source>
        <strain>cv. Columbia</strain>
    </source>
</reference>
<reference key="2">
    <citation type="journal article" date="2017" name="Plant J.">
        <title>Araport11: a complete reannotation of the Arabidopsis thaliana reference genome.</title>
        <authorList>
            <person name="Cheng C.Y."/>
            <person name="Krishnakumar V."/>
            <person name="Chan A.P."/>
            <person name="Thibaud-Nissen F."/>
            <person name="Schobel S."/>
            <person name="Town C.D."/>
        </authorList>
    </citation>
    <scope>GENOME REANNOTATION</scope>
    <source>
        <strain>cv. Columbia</strain>
    </source>
</reference>
<reference key="3">
    <citation type="journal article" date="2003" name="Science">
        <title>Empirical analysis of transcriptional activity in the Arabidopsis genome.</title>
        <authorList>
            <person name="Yamada K."/>
            <person name="Lim J."/>
            <person name="Dale J.M."/>
            <person name="Chen H."/>
            <person name="Shinn P."/>
            <person name="Palm C.J."/>
            <person name="Southwick A.M."/>
            <person name="Wu H.C."/>
            <person name="Kim C.J."/>
            <person name="Nguyen M."/>
            <person name="Pham P.K."/>
            <person name="Cheuk R.F."/>
            <person name="Karlin-Newmann G."/>
            <person name="Liu S.X."/>
            <person name="Lam B."/>
            <person name="Sakano H."/>
            <person name="Wu T."/>
            <person name="Yu G."/>
            <person name="Miranda M."/>
            <person name="Quach H.L."/>
            <person name="Tripp M."/>
            <person name="Chang C.H."/>
            <person name="Lee J.M."/>
            <person name="Toriumi M.J."/>
            <person name="Chan M.M."/>
            <person name="Tang C.C."/>
            <person name="Onodera C.S."/>
            <person name="Deng J.M."/>
            <person name="Akiyama K."/>
            <person name="Ansari Y."/>
            <person name="Arakawa T."/>
            <person name="Banh J."/>
            <person name="Banno F."/>
            <person name="Bowser L."/>
            <person name="Brooks S.Y."/>
            <person name="Carninci P."/>
            <person name="Chao Q."/>
            <person name="Choy N."/>
            <person name="Enju A."/>
            <person name="Goldsmith A.D."/>
            <person name="Gurjal M."/>
            <person name="Hansen N.F."/>
            <person name="Hayashizaki Y."/>
            <person name="Johnson-Hopson C."/>
            <person name="Hsuan V.W."/>
            <person name="Iida K."/>
            <person name="Karnes M."/>
            <person name="Khan S."/>
            <person name="Koesema E."/>
            <person name="Ishida J."/>
            <person name="Jiang P.X."/>
            <person name="Jones T."/>
            <person name="Kawai J."/>
            <person name="Kamiya A."/>
            <person name="Meyers C."/>
            <person name="Nakajima M."/>
            <person name="Narusaka M."/>
            <person name="Seki M."/>
            <person name="Sakurai T."/>
            <person name="Satou M."/>
            <person name="Tamse R."/>
            <person name="Vaysberg M."/>
            <person name="Wallender E.K."/>
            <person name="Wong C."/>
            <person name="Yamamura Y."/>
            <person name="Yuan S."/>
            <person name="Shinozaki K."/>
            <person name="Davis R.W."/>
            <person name="Theologis A."/>
            <person name="Ecker J.R."/>
        </authorList>
    </citation>
    <scope>NUCLEOTIDE SEQUENCE [LARGE SCALE MRNA]</scope>
    <source>
        <strain>cv. Columbia</strain>
    </source>
</reference>
<reference key="4">
    <citation type="submission" date="2002-03" db="EMBL/GenBank/DDBJ databases">
        <title>Full-length cDNA from Arabidopsis thaliana.</title>
        <authorList>
            <person name="Brover V.V."/>
            <person name="Troukhan M.E."/>
            <person name="Alexandrov N.A."/>
            <person name="Lu Y.-P."/>
            <person name="Flavell R.B."/>
            <person name="Feldmann K.A."/>
        </authorList>
    </citation>
    <scope>NUCLEOTIDE SEQUENCE [LARGE SCALE MRNA]</scope>
</reference>
<reference key="5">
    <citation type="journal article" date="2009" name="Plant Mol. Biol.">
        <title>LFR, which encodes a novel nuclear-localized Armadillo-repeat protein, affects multiple developmental processes in the aerial organs in Arabidopsis.</title>
        <authorList>
            <person name="Wang Z."/>
            <person name="Yuan T."/>
            <person name="Yuan C."/>
            <person name="Niu Y."/>
            <person name="Sun D."/>
            <person name="Cui S."/>
        </authorList>
    </citation>
    <scope>FUNCTION</scope>
    <scope>SUBCELLULAR LOCATION</scope>
    <scope>TISSUE SPECIFICITY</scope>
    <scope>DISRUPTION PHENOTYPE</scope>
</reference>
<reference key="6">
    <citation type="journal article" date="2012" name="Mol. Plant">
        <title>The Arabidopsis LFR gene is required for the formation of anther cell layers and normal expression of key regulatory genes.</title>
        <authorList>
            <person name="Wang X.T."/>
            <person name="Yuan C."/>
            <person name="Yuan T.T."/>
            <person name="Cui S.J."/>
        </authorList>
    </citation>
    <scope>FUNCTION</scope>
    <scope>DISRUPTION PHENOTYPE</scope>
</reference>
<reference key="7">
    <citation type="journal article" date="2018" name="Plant J.">
        <title>LFR is functionally associated with AS2 to mediate leaf development in Arabidopsis.</title>
        <authorList>
            <person name="Lin X."/>
            <person name="Gu D."/>
            <person name="Zhao H."/>
            <person name="Peng Y."/>
            <person name="Zhang G."/>
            <person name="Yuan T."/>
            <person name="Li M."/>
            <person name="Wang Z."/>
            <person name="Wang X."/>
            <person name="Cui S."/>
        </authorList>
    </citation>
    <scope>FUNCTION</scope>
    <scope>INTERACTION WITH AS2</scope>
    <scope>SUBCELLULAR LOCATION</scope>
</reference>
<name>LFR_ARATH</name>
<dbReference type="EMBL" id="AB026655">
    <property type="protein sequence ID" value="BAB02090.1"/>
    <property type="molecule type" value="Genomic_DNA"/>
</dbReference>
<dbReference type="EMBL" id="CP002686">
    <property type="protein sequence ID" value="AEE76703.1"/>
    <property type="molecule type" value="Genomic_DNA"/>
</dbReference>
<dbReference type="EMBL" id="AY072191">
    <property type="protein sequence ID" value="AAL60013.1"/>
    <property type="molecule type" value="mRNA"/>
</dbReference>
<dbReference type="EMBL" id="AY096422">
    <property type="protein sequence ID" value="AAM20062.1"/>
    <property type="molecule type" value="mRNA"/>
</dbReference>
<dbReference type="EMBL" id="AY084876">
    <property type="protein sequence ID" value="AAM61439.1"/>
    <property type="molecule type" value="mRNA"/>
</dbReference>
<dbReference type="RefSeq" id="NP_566721.1">
    <property type="nucleotide sequence ID" value="NM_113199.5"/>
</dbReference>
<dbReference type="SMR" id="Q9LS90"/>
<dbReference type="BioGRID" id="7205">
    <property type="interactions" value="105"/>
</dbReference>
<dbReference type="ComplexPortal" id="CPX-7726">
    <property type="entry name" value="SYD-associated SWI/SNF ATP-dependent chromatin remodeling complex"/>
</dbReference>
<dbReference type="ComplexPortal" id="CPX-7727">
    <property type="entry name" value="MINU1/2-associated SWI/SNF ATP-dependent chromatin remodeling complex"/>
</dbReference>
<dbReference type="FunCoup" id="Q9LS90">
    <property type="interactions" value="2108"/>
</dbReference>
<dbReference type="IntAct" id="Q9LS90">
    <property type="interactions" value="1"/>
</dbReference>
<dbReference type="STRING" id="3702.Q9LS90"/>
<dbReference type="PaxDb" id="3702-AT3G22990.1"/>
<dbReference type="ProteomicsDB" id="238446"/>
<dbReference type="EnsemblPlants" id="AT3G22990.1">
    <property type="protein sequence ID" value="AT3G22990.1"/>
    <property type="gene ID" value="AT3G22990"/>
</dbReference>
<dbReference type="GeneID" id="821873"/>
<dbReference type="Gramene" id="AT3G22990.1">
    <property type="protein sequence ID" value="AT3G22990.1"/>
    <property type="gene ID" value="AT3G22990"/>
</dbReference>
<dbReference type="KEGG" id="ath:AT3G22990"/>
<dbReference type="Araport" id="AT3G22990"/>
<dbReference type="TAIR" id="AT3G22990">
    <property type="gene designation" value="LFR"/>
</dbReference>
<dbReference type="eggNOG" id="ENOG502QU15">
    <property type="taxonomic scope" value="Eukaryota"/>
</dbReference>
<dbReference type="HOGENOM" id="CLU_035867_0_0_1"/>
<dbReference type="InParanoid" id="Q9LS90"/>
<dbReference type="OMA" id="FQCIEDY"/>
<dbReference type="PhylomeDB" id="Q9LS90"/>
<dbReference type="PRO" id="PR:Q9LS90"/>
<dbReference type="Proteomes" id="UP000006548">
    <property type="component" value="Chromosome 3"/>
</dbReference>
<dbReference type="ExpressionAtlas" id="Q9LS90">
    <property type="expression patterns" value="baseline and differential"/>
</dbReference>
<dbReference type="GO" id="GO:0035060">
    <property type="term" value="C:brahma complex"/>
    <property type="evidence" value="ECO:0007669"/>
    <property type="project" value="InterPro"/>
</dbReference>
<dbReference type="GO" id="GO:0005634">
    <property type="term" value="C:nucleus"/>
    <property type="evidence" value="ECO:0000314"/>
    <property type="project" value="TAIR"/>
</dbReference>
<dbReference type="GO" id="GO:0016514">
    <property type="term" value="C:SWI/SNF complex"/>
    <property type="evidence" value="ECO:0007669"/>
    <property type="project" value="InterPro"/>
</dbReference>
<dbReference type="GO" id="GO:0048653">
    <property type="term" value="P:anther development"/>
    <property type="evidence" value="ECO:0000315"/>
    <property type="project" value="UniProtKB"/>
</dbReference>
<dbReference type="GO" id="GO:0006338">
    <property type="term" value="P:chromatin remodeling"/>
    <property type="evidence" value="ECO:0007669"/>
    <property type="project" value="InterPro"/>
</dbReference>
<dbReference type="GO" id="GO:0009793">
    <property type="term" value="P:embryo development ending in seed dormancy"/>
    <property type="evidence" value="ECO:0007669"/>
    <property type="project" value="EnsemblPlants"/>
</dbReference>
<dbReference type="GO" id="GO:0009908">
    <property type="term" value="P:flower development"/>
    <property type="evidence" value="ECO:0000315"/>
    <property type="project" value="TAIR"/>
</dbReference>
<dbReference type="GO" id="GO:0048366">
    <property type="term" value="P:leaf development"/>
    <property type="evidence" value="ECO:0000315"/>
    <property type="project" value="TAIR"/>
</dbReference>
<dbReference type="GO" id="GO:2000014">
    <property type="term" value="P:regulation of endosperm development"/>
    <property type="evidence" value="ECO:0007669"/>
    <property type="project" value="EnsemblPlants"/>
</dbReference>
<dbReference type="GO" id="GO:0051783">
    <property type="term" value="P:regulation of nuclear division"/>
    <property type="evidence" value="ECO:0007669"/>
    <property type="project" value="EnsemblPlants"/>
</dbReference>
<dbReference type="Gene3D" id="1.25.10.10">
    <property type="entry name" value="Leucine-rich Repeat Variant"/>
    <property type="match status" value="1"/>
</dbReference>
<dbReference type="InterPro" id="IPR011989">
    <property type="entry name" value="ARM-like"/>
</dbReference>
<dbReference type="InterPro" id="IPR016024">
    <property type="entry name" value="ARM-type_fold"/>
</dbReference>
<dbReference type="InterPro" id="IPR000225">
    <property type="entry name" value="Armadillo"/>
</dbReference>
<dbReference type="InterPro" id="IPR021906">
    <property type="entry name" value="BAF250/Osa"/>
</dbReference>
<dbReference type="InterPro" id="IPR033388">
    <property type="entry name" value="BAF250_C"/>
</dbReference>
<dbReference type="PANTHER" id="PTHR12656">
    <property type="entry name" value="BRG-1 ASSOCIATED FACTOR 250 BAF250"/>
    <property type="match status" value="1"/>
</dbReference>
<dbReference type="PANTHER" id="PTHR12656:SF5">
    <property type="entry name" value="TRITHORAX GROUP PROTEIN OSA"/>
    <property type="match status" value="1"/>
</dbReference>
<dbReference type="Pfam" id="PF12031">
    <property type="entry name" value="BAF250_C"/>
    <property type="match status" value="1"/>
</dbReference>
<dbReference type="SUPFAM" id="SSF48371">
    <property type="entry name" value="ARM repeat"/>
    <property type="match status" value="1"/>
</dbReference>
<dbReference type="PROSITE" id="PS50176">
    <property type="entry name" value="ARM_REPEAT"/>
    <property type="match status" value="1"/>
</dbReference>
<sequence length="460" mass="50112">MQKRELGKSGGNSGGSSGPPAKRGRPFGSTSANSAAAAAAAAAADAMSPSALLGPSLLVHNSFVEQNNRRIVLALQSGLKSEVTWALNTLTLLSFKEKEDIRRDVMPLAKIAGLLDALLLIIDDWRDIALPKDLTRGTRVRTLGTNASVTGFGNEYDALASIQPPGSGIGSSAAEALGKKSTGKHQSSQWWMEEDGLFNLDDEGRSEKQMCAIAASNVIRNFSFMPDNEVVMAQHRHCLETVFQCIHDHMTEDEELVTNSLETIVNLAHLMDLRIFSSLKQSYININEKKAVQAVVGILNSSVKAWNCAAAELLGRLIINPDNEPFISPLIPQIHKRLIDLLSIQAVDAQAAAVGALYNLVEVNMDCRLKLASERWAVDRLLKVIKTPHPVPEVCRKAAMILENLVSEPQNRGLLLAYENAFAELLFQEGKYSDSFARILYELTARSNSRVASARGIWGM</sequence>
<evidence type="ECO:0000255" key="1"/>
<evidence type="ECO:0000256" key="2">
    <source>
        <dbReference type="SAM" id="MobiDB-lite"/>
    </source>
</evidence>
<evidence type="ECO:0000269" key="3">
    <source>
    </source>
</evidence>
<evidence type="ECO:0000269" key="4">
    <source>
    </source>
</evidence>
<evidence type="ECO:0000269" key="5">
    <source>
    </source>
</evidence>
<evidence type="ECO:0000303" key="6">
    <source>
    </source>
</evidence>
<evidence type="ECO:0000305" key="7"/>
<evidence type="ECO:0000312" key="8">
    <source>
        <dbReference type="Araport" id="AT3G22990"/>
    </source>
</evidence>
<evidence type="ECO:0000312" key="9">
    <source>
        <dbReference type="EMBL" id="BAB02090.1"/>
    </source>
</evidence>
<protein>
    <recommendedName>
        <fullName evidence="7">Armadillo repeat-containing protein LFR</fullName>
    </recommendedName>
    <alternativeName>
        <fullName evidence="6">Protein LEAF AND FLOWER RELATED</fullName>
    </alternativeName>
</protein>
<comment type="function">
    <text evidence="3 4 5">Involved in leaf and flower development (PubMed:18846319). Plays roles in leaf development partly by associating with AS2 and repressing KNAT1/BP transcription (PubMed:29775508). Required for the formation of anther cell layers and normal expression of genes that regulates anther development (PubMed:22461668).</text>
</comment>
<comment type="subunit">
    <text evidence="5">Interacts with AS2.</text>
</comment>
<comment type="interaction">
    <interactant intactId="EBI-40270350">
        <id>Q9LS90</id>
    </interactant>
    <interactant intactId="EBI-15583266">
        <id>Q9LSE2</id>
        <label>SCRM</label>
    </interactant>
    <organismsDiffer>false</organismsDiffer>
    <experiments>3</experiments>
</comment>
<comment type="subcellular location">
    <subcellularLocation>
        <location evidence="3 5">Nucleus</location>
    </subcellularLocation>
    <text evidence="3">Tends to cluster in the nucleus as discrete rounded speckles.</text>
</comment>
<comment type="tissue specificity">
    <text evidence="3">Expressed in roots, leaves, stems and flowers.</text>
</comment>
<comment type="disruption phenotype">
    <text evidence="3">Developmental and morphological defects at the vegetative stage in cotyledons and true leaves, and during the reproductive phase in flowers and siliques. Increased abortive frequency of embryos.</text>
</comment>
<accession>Q9LS90</accession>
<accession>Q8LFF7</accession>
<organism>
    <name type="scientific">Arabidopsis thaliana</name>
    <name type="common">Mouse-ear cress</name>
    <dbReference type="NCBI Taxonomy" id="3702"/>
    <lineage>
        <taxon>Eukaryota</taxon>
        <taxon>Viridiplantae</taxon>
        <taxon>Streptophyta</taxon>
        <taxon>Embryophyta</taxon>
        <taxon>Tracheophyta</taxon>
        <taxon>Spermatophyta</taxon>
        <taxon>Magnoliopsida</taxon>
        <taxon>eudicotyledons</taxon>
        <taxon>Gunneridae</taxon>
        <taxon>Pentapetalae</taxon>
        <taxon>rosids</taxon>
        <taxon>malvids</taxon>
        <taxon>Brassicales</taxon>
        <taxon>Brassicaceae</taxon>
        <taxon>Camelineae</taxon>
        <taxon>Arabidopsis</taxon>
    </lineage>
</organism>
<feature type="chain" id="PRO_0000431234" description="Armadillo repeat-containing protein LFR">
    <location>
        <begin position="1"/>
        <end position="460"/>
    </location>
</feature>
<feature type="repeat" description="ARM 1" evidence="1">
    <location>
        <begin position="227"/>
        <end position="269"/>
    </location>
</feature>
<feature type="repeat" description="ARM 2" evidence="1">
    <location>
        <begin position="323"/>
        <end position="362"/>
    </location>
</feature>
<feature type="repeat" description="ARM 3" evidence="1">
    <location>
        <begin position="366"/>
        <end position="407"/>
    </location>
</feature>
<feature type="region of interest" description="Disordered" evidence="2">
    <location>
        <begin position="1"/>
        <end position="30"/>
    </location>
</feature>
<feature type="compositionally biased region" description="Gly residues" evidence="2">
    <location>
        <begin position="8"/>
        <end position="17"/>
    </location>
</feature>
<feature type="sequence conflict" description="In Ref. 4; AAM61439." ref="4">
    <original>N</original>
    <variation>D</variation>
    <location>
        <position position="300"/>
    </location>
</feature>
<feature type="sequence conflict" description="In Ref. 4; AAM61439." ref="4">
    <original>I</original>
    <variation>V</variation>
    <location>
        <position position="339"/>
    </location>
</feature>